<keyword id="KW-0002">3D-structure</keyword>
<keyword id="KW-0007">Acetylation</keyword>
<keyword id="KW-0104">Cadmium</keyword>
<keyword id="KW-0903">Direct protein sequencing</keyword>
<keyword id="KW-0479">Metal-binding</keyword>
<keyword id="KW-0480">Metal-thiolate cluster</keyword>
<keyword id="KW-0597">Phosphoprotein</keyword>
<keyword id="KW-1185">Reference proteome</keyword>
<keyword id="KW-0862">Zinc</keyword>
<dbReference type="EMBL" id="M11794">
    <property type="protein sequence ID" value="AAA41640.1"/>
    <property type="molecule type" value="Genomic_DNA"/>
</dbReference>
<dbReference type="PIR" id="B61561">
    <property type="entry name" value="SMRT2"/>
</dbReference>
<dbReference type="RefSeq" id="NP_001131036.1">
    <property type="nucleotide sequence ID" value="NM_001137564.2"/>
</dbReference>
<dbReference type="PDB" id="1MRT">
    <property type="method" value="NMR"/>
    <property type="chains" value="A=31-61"/>
</dbReference>
<dbReference type="PDB" id="2MRT">
    <property type="method" value="NMR"/>
    <property type="chains" value="A=1-30"/>
</dbReference>
<dbReference type="PDB" id="4MT2">
    <property type="method" value="X-ray"/>
    <property type="resolution" value="2.00 A"/>
    <property type="chains" value="A=1-61"/>
</dbReference>
<dbReference type="PDBsum" id="1MRT"/>
<dbReference type="PDBsum" id="2MRT"/>
<dbReference type="PDBsum" id="4MT2"/>
<dbReference type="BMRB" id="P04355"/>
<dbReference type="SMR" id="P04355"/>
<dbReference type="FunCoup" id="P04355">
    <property type="interactions" value="51"/>
</dbReference>
<dbReference type="IntAct" id="P04355">
    <property type="interactions" value="1"/>
</dbReference>
<dbReference type="STRING" id="10116.ENSRNOP00000062585"/>
<dbReference type="iPTMnet" id="P04355"/>
<dbReference type="PhosphoSitePlus" id="P04355"/>
<dbReference type="PaxDb" id="10116-ENSRNOP00000062585"/>
<dbReference type="Ensembl" id="ENSRNOT00000067391.2">
    <property type="protein sequence ID" value="ENSRNOP00000062585.1"/>
    <property type="gene ID" value="ENSRNOG00000043098.2"/>
</dbReference>
<dbReference type="GeneID" id="689415"/>
<dbReference type="KEGG" id="rno:689415"/>
<dbReference type="UCSC" id="RGD:1592345">
    <property type="organism name" value="rat"/>
</dbReference>
<dbReference type="AGR" id="RGD:1592345"/>
<dbReference type="CTD" id="17750"/>
<dbReference type="eggNOG" id="KOG4738">
    <property type="taxonomic scope" value="Eukaryota"/>
</dbReference>
<dbReference type="GeneTree" id="ENSGT00950000182967"/>
<dbReference type="HOGENOM" id="CLU_171204_2_0_1"/>
<dbReference type="InParanoid" id="P04355"/>
<dbReference type="OMA" id="KECKCSS"/>
<dbReference type="PhylomeDB" id="P04355"/>
<dbReference type="TreeFam" id="TF336054"/>
<dbReference type="Reactome" id="R-RNO-5661231">
    <property type="pathway name" value="Metallothioneins bind metals"/>
</dbReference>
<dbReference type="EvolutionaryTrace" id="P04355"/>
<dbReference type="PRO" id="PR:P04355"/>
<dbReference type="Proteomes" id="UP000002494">
    <property type="component" value="Chromosome 19"/>
</dbReference>
<dbReference type="Bgee" id="ENSRNOG00000043098">
    <property type="expression patterns" value="Expressed in kidney and 20 other cell types or tissues"/>
</dbReference>
<dbReference type="ExpressionAtlas" id="P04355">
    <property type="expression patterns" value="baseline and differential"/>
</dbReference>
<dbReference type="GO" id="GO:0005737">
    <property type="term" value="C:cytoplasm"/>
    <property type="evidence" value="ECO:0000250"/>
    <property type="project" value="UniProtKB"/>
</dbReference>
<dbReference type="GO" id="GO:0005634">
    <property type="term" value="C:nucleus"/>
    <property type="evidence" value="ECO:0000250"/>
    <property type="project" value="UniProtKB"/>
</dbReference>
<dbReference type="GO" id="GO:0046872">
    <property type="term" value="F:metal ion binding"/>
    <property type="evidence" value="ECO:0000318"/>
    <property type="project" value="GO_Central"/>
</dbReference>
<dbReference type="GO" id="GO:0008270">
    <property type="term" value="F:zinc ion binding"/>
    <property type="evidence" value="ECO:0000250"/>
    <property type="project" value="UniProtKB"/>
</dbReference>
<dbReference type="GO" id="GO:0071276">
    <property type="term" value="P:cellular response to cadmium ion"/>
    <property type="evidence" value="ECO:0000318"/>
    <property type="project" value="GO_Central"/>
</dbReference>
<dbReference type="GO" id="GO:0071280">
    <property type="term" value="P:cellular response to copper ion"/>
    <property type="evidence" value="ECO:0000318"/>
    <property type="project" value="GO_Central"/>
</dbReference>
<dbReference type="GO" id="GO:0071294">
    <property type="term" value="P:cellular response to zinc ion"/>
    <property type="evidence" value="ECO:0000250"/>
    <property type="project" value="UniProtKB"/>
</dbReference>
<dbReference type="GO" id="GO:0010273">
    <property type="term" value="P:detoxification of copper ion"/>
    <property type="evidence" value="ECO:0000318"/>
    <property type="project" value="GO_Central"/>
</dbReference>
<dbReference type="GO" id="GO:0006882">
    <property type="term" value="P:intracellular zinc ion homeostasis"/>
    <property type="evidence" value="ECO:0000318"/>
    <property type="project" value="GO_Central"/>
</dbReference>
<dbReference type="GO" id="GO:0045926">
    <property type="term" value="P:negative regulation of growth"/>
    <property type="evidence" value="ECO:0000250"/>
    <property type="project" value="UniProtKB"/>
</dbReference>
<dbReference type="FunFam" id="4.10.10.10:FF:000001">
    <property type="entry name" value="Metallothionein"/>
    <property type="match status" value="1"/>
</dbReference>
<dbReference type="Gene3D" id="4.10.10.10">
    <property type="entry name" value="Metallothionein Isoform II"/>
    <property type="match status" value="1"/>
</dbReference>
<dbReference type="InterPro" id="IPR017854">
    <property type="entry name" value="Metalthion_dom_sf"/>
</dbReference>
<dbReference type="InterPro" id="IPR023587">
    <property type="entry name" value="Metalthion_dom_sf_vert"/>
</dbReference>
<dbReference type="InterPro" id="IPR000006">
    <property type="entry name" value="Metalthion_vert"/>
</dbReference>
<dbReference type="InterPro" id="IPR018064">
    <property type="entry name" value="Metalthion_vert_metal_BS"/>
</dbReference>
<dbReference type="PANTHER" id="PTHR23299">
    <property type="entry name" value="METALLOTHIONEIN"/>
    <property type="match status" value="1"/>
</dbReference>
<dbReference type="PANTHER" id="PTHR23299:SF22">
    <property type="entry name" value="METALLOTHIONEIN-1G"/>
    <property type="match status" value="1"/>
</dbReference>
<dbReference type="Pfam" id="PF00131">
    <property type="entry name" value="Metallothio"/>
    <property type="match status" value="1"/>
</dbReference>
<dbReference type="PRINTS" id="PR00860">
    <property type="entry name" value="MTVERTEBRATE"/>
</dbReference>
<dbReference type="SUPFAM" id="SSF57868">
    <property type="entry name" value="Metallothionein"/>
    <property type="match status" value="1"/>
</dbReference>
<dbReference type="PROSITE" id="PS00203">
    <property type="entry name" value="METALLOTHIONEIN_VRT"/>
    <property type="match status" value="1"/>
</dbReference>
<sequence length="61" mass="6145">MDPNCSCATDGSCSCAGSCKCKQCKCTSCKKSCCSCCPVGCAKCSQGCICKEASDKCSCCA</sequence>
<accession>P04355</accession>
<organism>
    <name type="scientific">Rattus norvegicus</name>
    <name type="common">Rat</name>
    <dbReference type="NCBI Taxonomy" id="10116"/>
    <lineage>
        <taxon>Eukaryota</taxon>
        <taxon>Metazoa</taxon>
        <taxon>Chordata</taxon>
        <taxon>Craniata</taxon>
        <taxon>Vertebrata</taxon>
        <taxon>Euteleostomi</taxon>
        <taxon>Mammalia</taxon>
        <taxon>Eutheria</taxon>
        <taxon>Euarchontoglires</taxon>
        <taxon>Glires</taxon>
        <taxon>Rodentia</taxon>
        <taxon>Myomorpha</taxon>
        <taxon>Muroidea</taxon>
        <taxon>Muridae</taxon>
        <taxon>Murinae</taxon>
        <taxon>Rattus</taxon>
    </lineage>
</organism>
<reference key="1">
    <citation type="journal article" date="1984" name="J. Biol. Chem.">
        <title>Structural characterization of the isoforms of neonatal and adult rat liver metallothionein.</title>
        <authorList>
            <person name="Winge D.R."/>
            <person name="Nielson K.B."/>
            <person name="Zeikus R.D."/>
            <person name="Gray W.R."/>
        </authorList>
    </citation>
    <scope>PROTEIN SEQUENCE</scope>
    <scope>ACETYLATION AT MET-1</scope>
    <source>
        <tissue>Liver</tissue>
    </source>
</reference>
<reference key="2">
    <citation type="journal article" date="1987" name="Experientia Suppl.">
        <title>Rat metallothionein multigene family.</title>
        <authorList>
            <person name="Andersen R.D."/>
            <person name="Taplitz S.J."/>
            <person name="Birren B.W."/>
            <person name="Bristol G."/>
            <person name="Herschman H.R."/>
        </authorList>
    </citation>
    <scope>NUCLEOTIDE SEQUENCE [GENOMIC DNA]</scope>
</reference>
<reference key="3">
    <citation type="journal article" date="1983" name="J. Biol. Chem.">
        <title>Single crystals of cadmium, zinc metallothionein.</title>
        <authorList>
            <person name="Melis K.A."/>
            <person name="Carter D.C."/>
            <person name="Stout C.D."/>
            <person name="Winge D.R."/>
        </authorList>
    </citation>
    <scope>CRYSTALLIZATION</scope>
</reference>
<reference key="4">
    <citation type="journal article" date="1986" name="Science">
        <title>Crystal structure of Cd,Zn metallothionein.</title>
        <authorList>
            <person name="Furey W.F. Jr."/>
            <person name="Robbins A.H."/>
            <person name="Clancy L.L."/>
            <person name="Winge D.R."/>
            <person name="Wand B.C."/>
            <person name="Stout C.D."/>
        </authorList>
    </citation>
    <scope>X-RAY CRYSTALLOGRAPHY (2.3 ANGSTROMS)</scope>
</reference>
<reference key="5">
    <citation type="journal article" date="1987" name="Eur. J. Biochem.">
        <title>Sequence-specific 1H-NMR assignments in rat-liver metallothionein-2.</title>
        <authorList>
            <person name="Woergoetter E."/>
            <person name="Wagner G."/>
            <person name="Vasak M."/>
            <person name="Kaegi J.H.R."/>
            <person name="Wuethrich K."/>
        </authorList>
    </citation>
    <scope>STRUCTURE BY NMR</scope>
</reference>
<reference evidence="6 7" key="6">
    <citation type="journal article" date="1988" name="J. Mol. Biol.">
        <title>Conformation of [Cd7]-metallothionein-2 from rat liver in aqueous solution determined by nuclear magnetic resonance spectroscopy.</title>
        <authorList>
            <person name="Schultze P."/>
            <person name="Woergotter E."/>
            <person name="Braun W."/>
            <person name="Wagner G."/>
            <person name="Vasak M."/>
            <person name="Kaegi J.H.R."/>
            <person name="Wuethrich K."/>
        </authorList>
    </citation>
    <scope>STRUCTURE BY NMR IN COMPLEX WITH CADMIUM IONS</scope>
    <scope>DOMAIN</scope>
</reference>
<reference evidence="8" key="7">
    <citation type="journal article" date="1991" name="J. Mol. Biol.">
        <title>Refined crystal structure of Cd, Zn metallothionein at 2.0-A resolution.</title>
        <authorList>
            <person name="Robbins A.H."/>
            <person name="McRee D.E."/>
            <person name="Williamson M."/>
            <person name="Collett S.A."/>
            <person name="Xuong N.H."/>
            <person name="Furey W.F. Jr."/>
            <person name="Wang B.C."/>
            <person name="Stout C.D."/>
        </authorList>
    </citation>
    <scope>X-RAY CRYSTALLOGRAPHY (2.00 ANGSTROMS) IN COMPLEX WITH ZINC AND CADMIUM IONS</scope>
    <scope>DOMAIN</scope>
</reference>
<protein>
    <recommendedName>
        <fullName>Metallothionein-2</fullName>
        <shortName>MT-2</shortName>
    </recommendedName>
    <alternativeName>
        <fullName>Metallothionein-II</fullName>
        <shortName>MT-II</shortName>
    </alternativeName>
</protein>
<comment type="function">
    <text>Metallothioneins have a high content of cysteine residues that bind various heavy metals; these proteins are transcriptionally regulated by both heavy metals and glucocorticoids.</text>
</comment>
<comment type="domain">
    <text evidence="2 3">Class I metallothioneins contain 2 metal-binding domains: four divalent ions are chelated within cluster A of the alpha domain and are coordinated via cysteinyl thiolate bridges to 11 cysteine ligands. Cluster B, the corresponding region within the beta domain, can ligate three divalent ions to 9 cysteines.</text>
</comment>
<comment type="similarity">
    <text evidence="5">Belongs to the metallothionein superfamily. Type 1 family.</text>
</comment>
<name>MT2_RAT</name>
<proteinExistence type="evidence at protein level"/>
<feature type="chain" id="PRO_0000197222" description="Metallothionein-2">
    <location>
        <begin position="1"/>
        <end position="61"/>
    </location>
</feature>
<feature type="region of interest" description="Beta">
    <location>
        <begin position="1"/>
        <end position="29"/>
    </location>
</feature>
<feature type="region of interest" description="Alpha">
    <location>
        <begin position="30"/>
        <end position="61"/>
    </location>
</feature>
<feature type="binding site" evidence="2 3 7 8">
    <location>
        <position position="5"/>
    </location>
    <ligand>
        <name>a divalent metal cation</name>
        <dbReference type="ChEBI" id="CHEBI:60240"/>
        <label>1</label>
        <note>in cluster B</note>
    </ligand>
</feature>
<feature type="binding site" evidence="2 3 7 8">
    <location>
        <position position="7"/>
    </location>
    <ligand>
        <name>a divalent metal cation</name>
        <dbReference type="ChEBI" id="CHEBI:60240"/>
        <label>1</label>
        <note>in cluster B</note>
    </ligand>
</feature>
<feature type="binding site" evidence="2 3 7 8">
    <location>
        <position position="7"/>
    </location>
    <ligand>
        <name>a divalent metal cation</name>
        <dbReference type="ChEBI" id="CHEBI:60240"/>
        <label>2</label>
        <note>in cluster B</note>
    </ligand>
</feature>
<feature type="binding site" evidence="2 3 7 8">
    <location>
        <position position="13"/>
    </location>
    <ligand>
        <name>a divalent metal cation</name>
        <dbReference type="ChEBI" id="CHEBI:60240"/>
        <label>2</label>
        <note>in cluster B</note>
    </ligand>
</feature>
<feature type="binding site" evidence="2 3 7 8">
    <location>
        <position position="15"/>
    </location>
    <ligand>
        <name>a divalent metal cation</name>
        <dbReference type="ChEBI" id="CHEBI:60240"/>
        <label>2</label>
        <note>in cluster B</note>
    </ligand>
</feature>
<feature type="binding site" evidence="2 3 7 8">
    <location>
        <position position="15"/>
    </location>
    <ligand>
        <name>a divalent metal cation</name>
        <dbReference type="ChEBI" id="CHEBI:60240"/>
        <label>3</label>
        <note>in cluster B</note>
    </ligand>
</feature>
<feature type="binding site" evidence="2 3 7 8">
    <location>
        <position position="19"/>
    </location>
    <ligand>
        <name>a divalent metal cation</name>
        <dbReference type="ChEBI" id="CHEBI:60240"/>
        <label>3</label>
        <note>in cluster B</note>
    </ligand>
</feature>
<feature type="binding site" evidence="2 3 7 8">
    <location>
        <position position="21"/>
    </location>
    <ligand>
        <name>a divalent metal cation</name>
        <dbReference type="ChEBI" id="CHEBI:60240"/>
        <label>1</label>
        <note>in cluster B</note>
    </ligand>
</feature>
<feature type="binding site" evidence="2 3 7 8">
    <location>
        <position position="24"/>
    </location>
    <ligand>
        <name>a divalent metal cation</name>
        <dbReference type="ChEBI" id="CHEBI:60240"/>
        <label>1</label>
        <note>in cluster B</note>
    </ligand>
</feature>
<feature type="binding site" evidence="2 3 7 8">
    <location>
        <position position="24"/>
    </location>
    <ligand>
        <name>a divalent metal cation</name>
        <dbReference type="ChEBI" id="CHEBI:60240"/>
        <label>3</label>
        <note>in cluster B</note>
    </ligand>
</feature>
<feature type="binding site" evidence="2 3 7 8">
    <location>
        <position position="26"/>
    </location>
    <ligand>
        <name>a divalent metal cation</name>
        <dbReference type="ChEBI" id="CHEBI:60240"/>
        <label>2</label>
        <note>in cluster B</note>
    </ligand>
</feature>
<feature type="binding site" evidence="2 3 7 8">
    <location>
        <position position="29"/>
    </location>
    <ligand>
        <name>a divalent metal cation</name>
        <dbReference type="ChEBI" id="CHEBI:60240"/>
        <label>3</label>
        <note>in cluster B</note>
    </ligand>
</feature>
<feature type="binding site" evidence="2 3 6 8">
    <location>
        <position position="33"/>
    </location>
    <ligand>
        <name>a divalent metal cation</name>
        <dbReference type="ChEBI" id="CHEBI:60240"/>
        <label>4</label>
        <note>in cluster A</note>
    </ligand>
</feature>
<feature type="binding site" evidence="2 3 6 8">
    <location>
        <position position="34"/>
    </location>
    <ligand>
        <name>a divalent metal cation</name>
        <dbReference type="ChEBI" id="CHEBI:60240"/>
        <label>4</label>
        <note>in cluster A</note>
    </ligand>
</feature>
<feature type="binding site" evidence="2 3 6 8">
    <location>
        <position position="34"/>
    </location>
    <ligand>
        <name>a divalent metal cation</name>
        <dbReference type="ChEBI" id="CHEBI:60240"/>
        <label>5</label>
        <note>in cluster A</note>
    </ligand>
</feature>
<feature type="binding site" evidence="2 3 6 8">
    <location>
        <position position="36"/>
    </location>
    <ligand>
        <name>a divalent metal cation</name>
        <dbReference type="ChEBI" id="CHEBI:60240"/>
        <label>5</label>
        <note>in cluster A</note>
    </ligand>
</feature>
<feature type="binding site" evidence="2 3 6 8">
    <location>
        <position position="37"/>
    </location>
    <ligand>
        <name>a divalent metal cation</name>
        <dbReference type="ChEBI" id="CHEBI:60240"/>
        <label>5</label>
        <note>in cluster A</note>
    </ligand>
</feature>
<feature type="binding site" evidence="2 3 6 8">
    <location>
        <position position="37"/>
    </location>
    <ligand>
        <name>a divalent metal cation</name>
        <dbReference type="ChEBI" id="CHEBI:60240"/>
        <label>6</label>
        <note>in cluster A</note>
    </ligand>
</feature>
<feature type="binding site" evidence="2 3 6 8">
    <location>
        <position position="41"/>
    </location>
    <ligand>
        <name>a divalent metal cation</name>
        <dbReference type="ChEBI" id="CHEBI:60240"/>
        <label>6</label>
        <note>in cluster A</note>
    </ligand>
</feature>
<feature type="binding site" evidence="2 3 6 8">
    <location>
        <position position="44"/>
    </location>
    <ligand>
        <name>a divalent metal cation</name>
        <dbReference type="ChEBI" id="CHEBI:60240"/>
        <label>4</label>
        <note>in cluster A</note>
    </ligand>
</feature>
<feature type="binding site" evidence="2 3 6 8">
    <location>
        <position position="44"/>
    </location>
    <ligand>
        <name>a divalent metal cation</name>
        <dbReference type="ChEBI" id="CHEBI:60240"/>
        <label>6</label>
        <note>in cluster A</note>
    </ligand>
</feature>
<feature type="binding site" evidence="2 3 6 8">
    <location>
        <position position="48"/>
    </location>
    <ligand>
        <name>a divalent metal cation</name>
        <dbReference type="ChEBI" id="CHEBI:60240"/>
        <label>4</label>
        <note>in cluster A</note>
    </ligand>
</feature>
<feature type="binding site" evidence="2 3 6 8">
    <location>
        <position position="50"/>
    </location>
    <ligand>
        <name>a divalent metal cation</name>
        <dbReference type="ChEBI" id="CHEBI:60240"/>
        <label>5</label>
        <note>in cluster A</note>
    </ligand>
</feature>
<feature type="binding site" evidence="2 3 6 8">
    <location>
        <position position="50"/>
    </location>
    <ligand>
        <name>a divalent metal cation</name>
        <dbReference type="ChEBI" id="CHEBI:60240"/>
        <label>7</label>
        <note>in cluster A</note>
    </ligand>
</feature>
<feature type="binding site" evidence="2 3 6 8">
    <location>
        <position position="57"/>
    </location>
    <ligand>
        <name>a divalent metal cation</name>
        <dbReference type="ChEBI" id="CHEBI:60240"/>
        <label>7</label>
        <note>in cluster A</note>
    </ligand>
</feature>
<feature type="binding site" evidence="2 3 6 8">
    <location>
        <position position="59"/>
    </location>
    <ligand>
        <name>a divalent metal cation</name>
        <dbReference type="ChEBI" id="CHEBI:60240"/>
        <label>7</label>
        <note>in cluster A</note>
    </ligand>
</feature>
<feature type="binding site" evidence="2 3 6 8">
    <location>
        <position position="60"/>
    </location>
    <ligand>
        <name>a divalent metal cation</name>
        <dbReference type="ChEBI" id="CHEBI:60240"/>
        <label>6</label>
        <note>in cluster A</note>
    </ligand>
</feature>
<feature type="binding site" evidence="2 3 6 8">
    <location>
        <position position="60"/>
    </location>
    <ligand>
        <name>a divalent metal cation</name>
        <dbReference type="ChEBI" id="CHEBI:60240"/>
        <label>7</label>
        <note>in cluster A</note>
    </ligand>
</feature>
<feature type="modified residue" description="N-acetylmethionine" evidence="4">
    <location>
        <position position="1"/>
    </location>
</feature>
<feature type="modified residue" description="Phosphoserine" evidence="1">
    <location>
        <position position="58"/>
    </location>
</feature>
<feature type="strand" evidence="11">
    <location>
        <begin position="9"/>
        <end position="11"/>
    </location>
</feature>
<feature type="strand" evidence="10">
    <location>
        <begin position="16"/>
        <end position="18"/>
    </location>
</feature>
<feature type="strand" evidence="9">
    <location>
        <begin position="35"/>
        <end position="37"/>
    </location>
</feature>
<feature type="turn" evidence="9">
    <location>
        <begin position="38"/>
        <end position="40"/>
    </location>
</feature>
<feature type="turn" evidence="11">
    <location>
        <begin position="42"/>
        <end position="46"/>
    </location>
</feature>
<gene>
    <name type="primary">Mt2</name>
</gene>
<evidence type="ECO:0000250" key="1">
    <source>
        <dbReference type="UniProtKB" id="P02795"/>
    </source>
</evidence>
<evidence type="ECO:0000269" key="2">
    <source>
    </source>
</evidence>
<evidence type="ECO:0000269" key="3">
    <source>
    </source>
</evidence>
<evidence type="ECO:0000269" key="4">
    <source>
    </source>
</evidence>
<evidence type="ECO:0000305" key="5"/>
<evidence type="ECO:0007744" key="6">
    <source>
        <dbReference type="PDB" id="1MRT"/>
    </source>
</evidence>
<evidence type="ECO:0007744" key="7">
    <source>
        <dbReference type="PDB" id="2MRT"/>
    </source>
</evidence>
<evidence type="ECO:0007744" key="8">
    <source>
        <dbReference type="PDB" id="4MT2"/>
    </source>
</evidence>
<evidence type="ECO:0007829" key="9">
    <source>
        <dbReference type="PDB" id="1MRT"/>
    </source>
</evidence>
<evidence type="ECO:0007829" key="10">
    <source>
        <dbReference type="PDB" id="2MRT"/>
    </source>
</evidence>
<evidence type="ECO:0007829" key="11">
    <source>
        <dbReference type="PDB" id="4MT2"/>
    </source>
</evidence>